<protein>
    <recommendedName>
        <fullName evidence="1">Photosystem II reaction center protein I</fullName>
        <shortName evidence="1">PSII-I</shortName>
    </recommendedName>
    <alternativeName>
        <fullName evidence="1">PSII 4.8 kDa protein</fullName>
    </alternativeName>
</protein>
<feature type="chain" id="PRO_0000219624" description="Photosystem II reaction center protein I">
    <location>
        <begin position="1"/>
        <end position="38"/>
    </location>
</feature>
<feature type="transmembrane region" description="Helical" evidence="1">
    <location>
        <begin position="4"/>
        <end position="24"/>
    </location>
</feature>
<sequence>MLTLKIFVYTCVIFFSSLFIFGFLSNDPSRNPNRKDLE</sequence>
<dbReference type="EMBL" id="AB002583">
    <property type="protein sequence ID" value="BAC76301.1"/>
    <property type="molecule type" value="Genomic_DNA"/>
</dbReference>
<dbReference type="RefSeq" id="NP_849139.1">
    <property type="nucleotide sequence ID" value="NC_004799.1"/>
</dbReference>
<dbReference type="SMR" id="Q85FP4"/>
<dbReference type="STRING" id="280699.Q85FP4"/>
<dbReference type="EnsemblPlants" id="CMV240CT">
    <property type="protein sequence ID" value="CMV240CT"/>
    <property type="gene ID" value="CMV240C"/>
</dbReference>
<dbReference type="GeneID" id="844953"/>
<dbReference type="Gramene" id="CMV240CT">
    <property type="protein sequence ID" value="CMV240CT"/>
    <property type="gene ID" value="CMV240C"/>
</dbReference>
<dbReference type="KEGG" id="cme:CymeCp207"/>
<dbReference type="eggNOG" id="ENOG502SEUZ">
    <property type="taxonomic scope" value="Eukaryota"/>
</dbReference>
<dbReference type="HOGENOM" id="CLU_212150_0_0_1"/>
<dbReference type="Proteomes" id="UP000007014">
    <property type="component" value="Chloroplast"/>
</dbReference>
<dbReference type="GO" id="GO:0009535">
    <property type="term" value="C:chloroplast thylakoid membrane"/>
    <property type="evidence" value="ECO:0007669"/>
    <property type="project" value="UniProtKB-SubCell"/>
</dbReference>
<dbReference type="GO" id="GO:0009539">
    <property type="term" value="C:photosystem II reaction center"/>
    <property type="evidence" value="ECO:0007669"/>
    <property type="project" value="InterPro"/>
</dbReference>
<dbReference type="GO" id="GO:0015979">
    <property type="term" value="P:photosynthesis"/>
    <property type="evidence" value="ECO:0007669"/>
    <property type="project" value="UniProtKB-UniRule"/>
</dbReference>
<dbReference type="HAMAP" id="MF_01316">
    <property type="entry name" value="PSII_PsbI"/>
    <property type="match status" value="1"/>
</dbReference>
<dbReference type="InterPro" id="IPR003686">
    <property type="entry name" value="PSII_PsbI"/>
</dbReference>
<dbReference type="InterPro" id="IPR037271">
    <property type="entry name" value="PSII_PsbI_sf"/>
</dbReference>
<dbReference type="NCBIfam" id="NF002735">
    <property type="entry name" value="PRK02655.1"/>
    <property type="match status" value="1"/>
</dbReference>
<dbReference type="PANTHER" id="PTHR35772">
    <property type="entry name" value="PHOTOSYSTEM II REACTION CENTER PROTEIN I"/>
    <property type="match status" value="1"/>
</dbReference>
<dbReference type="PANTHER" id="PTHR35772:SF1">
    <property type="entry name" value="PHOTOSYSTEM II REACTION CENTER PROTEIN I"/>
    <property type="match status" value="1"/>
</dbReference>
<dbReference type="Pfam" id="PF02532">
    <property type="entry name" value="PsbI"/>
    <property type="match status" value="1"/>
</dbReference>
<dbReference type="SUPFAM" id="SSF161041">
    <property type="entry name" value="Photosystem II reaction center protein I, PsbI"/>
    <property type="match status" value="1"/>
</dbReference>
<name>PSBI_CYAM1</name>
<reference key="1">
    <citation type="journal article" date="2003" name="DNA Res.">
        <title>Complete sequence and analysis of the plastid genome of the unicellular red alga Cyanidioschyzon merolae.</title>
        <authorList>
            <person name="Ohta N."/>
            <person name="Matsuzaki M."/>
            <person name="Misumi O."/>
            <person name="Miyagishima S.-Y."/>
            <person name="Nozaki H."/>
            <person name="Tanaka K."/>
            <person name="Shin-i T."/>
            <person name="Kohara Y."/>
            <person name="Kuroiwa T."/>
        </authorList>
    </citation>
    <scope>NUCLEOTIDE SEQUENCE [LARGE SCALE GENOMIC DNA]</scope>
    <source>
        <strain>NIES-3377 / 10D</strain>
    </source>
</reference>
<keyword id="KW-0150">Chloroplast</keyword>
<keyword id="KW-0472">Membrane</keyword>
<keyword id="KW-0602">Photosynthesis</keyword>
<keyword id="KW-0604">Photosystem II</keyword>
<keyword id="KW-0934">Plastid</keyword>
<keyword id="KW-0674">Reaction center</keyword>
<keyword id="KW-1185">Reference proteome</keyword>
<keyword id="KW-0793">Thylakoid</keyword>
<keyword id="KW-0812">Transmembrane</keyword>
<keyword id="KW-1133">Transmembrane helix</keyword>
<accession>Q85FP4</accession>
<proteinExistence type="inferred from homology"/>
<evidence type="ECO:0000255" key="1">
    <source>
        <dbReference type="HAMAP-Rule" id="MF_01316"/>
    </source>
</evidence>
<organism>
    <name type="scientific">Cyanidioschyzon merolae (strain NIES-3377 / 10D)</name>
    <name type="common">Unicellular red alga</name>
    <dbReference type="NCBI Taxonomy" id="280699"/>
    <lineage>
        <taxon>Eukaryota</taxon>
        <taxon>Rhodophyta</taxon>
        <taxon>Bangiophyceae</taxon>
        <taxon>Cyanidiales</taxon>
        <taxon>Cyanidiaceae</taxon>
        <taxon>Cyanidioschyzon</taxon>
    </lineage>
</organism>
<gene>
    <name evidence="1" type="primary">psbI</name>
</gene>
<comment type="function">
    <text evidence="1">One of the components of the core complex of photosystem II (PSII), required for its stability and/or assembly. PSII is a light-driven water:plastoquinone oxidoreductase that uses light energy to abstract electrons from H(2)O, generating O(2) and a proton gradient subsequently used for ATP formation. It consists of a core antenna complex that captures photons, and an electron transfer chain that converts photonic excitation into a charge separation.</text>
</comment>
<comment type="subunit">
    <text evidence="1">PSII is composed of 1 copy each of membrane proteins PsbA, PsbB, PsbC, PsbD, PsbE, PsbF, PsbH, PsbI, PsbJ, PsbK, PsbL, PsbM, PsbT, PsbX, PsbY, PsbZ, Psb30/Ycf12, at least 3 peripheral proteins of the oxygen-evolving complex and a large number of cofactors. It forms dimeric complexes.</text>
</comment>
<comment type="subcellular location">
    <subcellularLocation>
        <location evidence="1">Plastid</location>
        <location evidence="1">Chloroplast thylakoid membrane</location>
        <topology evidence="1">Single-pass membrane protein</topology>
    </subcellularLocation>
</comment>
<comment type="similarity">
    <text evidence="1">Belongs to the PsbI family.</text>
</comment>
<geneLocation type="chloroplast"/>